<evidence type="ECO:0000250" key="1"/>
<evidence type="ECO:0000255" key="2">
    <source>
        <dbReference type="PROSITE-ProRule" id="PRU10095"/>
    </source>
</evidence>
<evidence type="ECO:0000305" key="3"/>
<dbReference type="EC" id="3.4.24.-"/>
<dbReference type="EMBL" id="BC056096">
    <property type="protein sequence ID" value="AAH56096.1"/>
    <property type="molecule type" value="mRNA"/>
</dbReference>
<dbReference type="RefSeq" id="NP_001080254.1">
    <property type="nucleotide sequence ID" value="NM_001086785.1"/>
</dbReference>
<dbReference type="MEROPS" id="M76.001"/>
<dbReference type="DNASU" id="379946"/>
<dbReference type="GeneID" id="379946"/>
<dbReference type="KEGG" id="xla:379946"/>
<dbReference type="AGR" id="Xenbase:XB-GENE-971253"/>
<dbReference type="CTD" id="379946"/>
<dbReference type="Xenbase" id="XB-GENE-971253">
    <property type="gene designation" value="atp23.L"/>
</dbReference>
<dbReference type="OMA" id="EAHQNCV"/>
<dbReference type="OrthoDB" id="285308at2759"/>
<dbReference type="Proteomes" id="UP000186698">
    <property type="component" value="Chromosome 3L"/>
</dbReference>
<dbReference type="Bgee" id="379946">
    <property type="expression patterns" value="Expressed in egg cell and 19 other cell types or tissues"/>
</dbReference>
<dbReference type="GO" id="GO:0005739">
    <property type="term" value="C:mitochondrion"/>
    <property type="evidence" value="ECO:0007669"/>
    <property type="project" value="GOC"/>
</dbReference>
<dbReference type="GO" id="GO:0046872">
    <property type="term" value="F:metal ion binding"/>
    <property type="evidence" value="ECO:0007669"/>
    <property type="project" value="UniProtKB-KW"/>
</dbReference>
<dbReference type="GO" id="GO:0004222">
    <property type="term" value="F:metalloendopeptidase activity"/>
    <property type="evidence" value="ECO:0007669"/>
    <property type="project" value="InterPro"/>
</dbReference>
<dbReference type="GO" id="GO:0034982">
    <property type="term" value="P:mitochondrial protein processing"/>
    <property type="evidence" value="ECO:0000318"/>
    <property type="project" value="GO_Central"/>
</dbReference>
<dbReference type="GO" id="GO:0033615">
    <property type="term" value="P:mitochondrial proton-transporting ATP synthase complex assembly"/>
    <property type="evidence" value="ECO:0000318"/>
    <property type="project" value="GO_Central"/>
</dbReference>
<dbReference type="InterPro" id="IPR019165">
    <property type="entry name" value="Peptidase_M76_ATP23"/>
</dbReference>
<dbReference type="PANTHER" id="PTHR21711">
    <property type="entry name" value="MITOCHONDRIAL INNER MEMBRANE PROTEASE"/>
    <property type="match status" value="1"/>
</dbReference>
<dbReference type="PANTHER" id="PTHR21711:SF0">
    <property type="entry name" value="MITOCHONDRIAL INNER MEMBRANE PROTEASE ATP23 HOMOLOG"/>
    <property type="match status" value="1"/>
</dbReference>
<dbReference type="Pfam" id="PF09768">
    <property type="entry name" value="Peptidase_M76"/>
    <property type="match status" value="1"/>
</dbReference>
<dbReference type="PROSITE" id="PS00142">
    <property type="entry name" value="ZINC_PROTEASE"/>
    <property type="match status" value="1"/>
</dbReference>
<comment type="similarity">
    <text evidence="3">Belongs to the peptidase M76 family.</text>
</comment>
<proteinExistence type="evidence at transcript level"/>
<reference key="1">
    <citation type="submission" date="2003-08" db="EMBL/GenBank/DDBJ databases">
        <authorList>
            <consortium name="NIH - Xenopus Gene Collection (XGC) project"/>
        </authorList>
    </citation>
    <scope>NUCLEOTIDE SEQUENCE [LARGE SCALE MRNA]</scope>
    <source>
        <tissue>Ovary</tissue>
    </source>
</reference>
<name>ATP23_XENLA</name>
<gene>
    <name type="primary">atp23</name>
</gene>
<feature type="chain" id="PRO_0000330347" description="Mitochondrial inner membrane protease ATP23 homolog">
    <location>
        <begin position="1"/>
        <end position="235"/>
    </location>
</feature>
<feature type="active site" evidence="2">
    <location>
        <position position="115"/>
    </location>
</feature>
<feature type="binding site" evidence="1">
    <location>
        <position position="114"/>
    </location>
    <ligand>
        <name>a divalent metal cation</name>
        <dbReference type="ChEBI" id="CHEBI:60240"/>
        <note>catalytic</note>
    </ligand>
</feature>
<feature type="binding site" evidence="1">
    <location>
        <position position="118"/>
    </location>
    <ligand>
        <name>a divalent metal cation</name>
        <dbReference type="ChEBI" id="CHEBI:60240"/>
        <note>catalytic</note>
    </ligand>
</feature>
<keyword id="KW-0378">Hydrolase</keyword>
<keyword id="KW-0479">Metal-binding</keyword>
<keyword id="KW-0482">Metalloprotease</keyword>
<keyword id="KW-0645">Protease</keyword>
<keyword id="KW-1185">Reference proteome</keyword>
<organism>
    <name type="scientific">Xenopus laevis</name>
    <name type="common">African clawed frog</name>
    <dbReference type="NCBI Taxonomy" id="8355"/>
    <lineage>
        <taxon>Eukaryota</taxon>
        <taxon>Metazoa</taxon>
        <taxon>Chordata</taxon>
        <taxon>Craniata</taxon>
        <taxon>Vertebrata</taxon>
        <taxon>Euteleostomi</taxon>
        <taxon>Amphibia</taxon>
        <taxon>Batrachia</taxon>
        <taxon>Anura</taxon>
        <taxon>Pipoidea</taxon>
        <taxon>Pipidae</taxon>
        <taxon>Xenopodinae</taxon>
        <taxon>Xenopus</taxon>
        <taxon>Xenopus</taxon>
    </lineage>
</organism>
<accession>Q7T0P7</accession>
<protein>
    <recommendedName>
        <fullName>Mitochondrial inner membrane protease ATP23 homolog</fullName>
        <ecNumber>3.4.24.-</ecNumber>
    </recommendedName>
</protein>
<sequence>MEEKKPEQDEFGYHLFPERGNGESKKNSILSKSLFSFNHKCQLMLKIALDTSPYAKLLLDAMKQSGCTVYKDRHFSCEECDGSVSGGFDAATSEIVLCQNNIHQQSHMNRVVTHELIHAFDHCRAHVDWFNNVRHLACSEIRAANLSGDCTLANELTRFKFGVKGHHQVCVRDRALRSILAVRNISRETAEKAVDEVFDSCFNDHEPFGRIPHSKADAKFAYRDFQNRDRYYANL</sequence>